<sequence>MILSWKDVLSQEKKKKYFINIIRFLKKERLKKIIYPDQKDIFNAFFLTSFNDIKVVILGQDPYFSKNQAHGLSFSVPKHVTIPPSLKNIYKELNTDFKKEHIFHHGCLESWANQGVFLLNSILTVESGKPKSHSNIGWNIFTDKVISVINLYKNSVVFLFWGSNAQKKSHLINRKNHYILKAAHPSPLSAYRGFFGCKHFSLTNKILLKTKKKPINWFLI</sequence>
<proteinExistence type="inferred from homology"/>
<comment type="function">
    <text evidence="1">Excises uracil residues from the DNA which can arise as a result of misincorporation of dUMP residues by DNA polymerase or due to deamination of cytosine.</text>
</comment>
<comment type="catalytic activity">
    <reaction evidence="1">
        <text>Hydrolyzes single-stranded DNA or mismatched double-stranded DNA and polynucleotides, releasing free uracil.</text>
        <dbReference type="EC" id="3.2.2.27"/>
    </reaction>
</comment>
<comment type="subcellular location">
    <subcellularLocation>
        <location evidence="1">Cytoplasm</location>
    </subcellularLocation>
</comment>
<comment type="similarity">
    <text evidence="1">Belongs to the uracil-DNA glycosylase (UDG) superfamily. UNG family.</text>
</comment>
<feature type="chain" id="PRO_1000199773" description="Uracil-DNA glycosylase">
    <location>
        <begin position="1"/>
        <end position="220"/>
    </location>
</feature>
<feature type="active site" description="Proton acceptor" evidence="1">
    <location>
        <position position="61"/>
    </location>
</feature>
<reference key="1">
    <citation type="journal article" date="2009" name="Science">
        <title>The dynamics and time scale of ongoing genomic erosion in symbiotic bacteria.</title>
        <authorList>
            <person name="Moran N.A."/>
            <person name="McLaughlin H.J."/>
            <person name="Sorek R."/>
        </authorList>
    </citation>
    <scope>NUCLEOTIDE SEQUENCE [LARGE SCALE GENOMIC DNA]</scope>
    <source>
        <strain>Tuc7</strain>
    </source>
</reference>
<gene>
    <name evidence="1" type="primary">ung</name>
    <name type="ordered locus">BUAPTUC7_181</name>
</gene>
<name>UNG_BUCAT</name>
<keyword id="KW-0963">Cytoplasm</keyword>
<keyword id="KW-0227">DNA damage</keyword>
<keyword id="KW-0234">DNA repair</keyword>
<keyword id="KW-0378">Hydrolase</keyword>
<organism>
    <name type="scientific">Buchnera aphidicola subsp. Acyrthosiphon pisum (strain Tuc7)</name>
    <dbReference type="NCBI Taxonomy" id="561501"/>
    <lineage>
        <taxon>Bacteria</taxon>
        <taxon>Pseudomonadati</taxon>
        <taxon>Pseudomonadota</taxon>
        <taxon>Gammaproteobacteria</taxon>
        <taxon>Enterobacterales</taxon>
        <taxon>Erwiniaceae</taxon>
        <taxon>Buchnera</taxon>
    </lineage>
</organism>
<dbReference type="EC" id="3.2.2.27" evidence="1"/>
<dbReference type="EMBL" id="CP001158">
    <property type="protein sequence ID" value="ACL30002.1"/>
    <property type="molecule type" value="Genomic_DNA"/>
</dbReference>
<dbReference type="RefSeq" id="WP_010895988.1">
    <property type="nucleotide sequence ID" value="NC_011834.1"/>
</dbReference>
<dbReference type="SMR" id="B8D787"/>
<dbReference type="KEGG" id="bau:BUAPTUC7_181"/>
<dbReference type="HOGENOM" id="CLU_032162_3_1_6"/>
<dbReference type="GO" id="GO:0005737">
    <property type="term" value="C:cytoplasm"/>
    <property type="evidence" value="ECO:0007669"/>
    <property type="project" value="UniProtKB-SubCell"/>
</dbReference>
<dbReference type="GO" id="GO:0004844">
    <property type="term" value="F:uracil DNA N-glycosylase activity"/>
    <property type="evidence" value="ECO:0007669"/>
    <property type="project" value="UniProtKB-UniRule"/>
</dbReference>
<dbReference type="GO" id="GO:0097510">
    <property type="term" value="P:base-excision repair, AP site formation via deaminated base removal"/>
    <property type="evidence" value="ECO:0007669"/>
    <property type="project" value="TreeGrafter"/>
</dbReference>
<dbReference type="CDD" id="cd10027">
    <property type="entry name" value="UDG-F1-like"/>
    <property type="match status" value="1"/>
</dbReference>
<dbReference type="FunFam" id="3.40.470.10:FF:000001">
    <property type="entry name" value="Uracil-DNA glycosylase"/>
    <property type="match status" value="1"/>
</dbReference>
<dbReference type="Gene3D" id="3.40.470.10">
    <property type="entry name" value="Uracil-DNA glycosylase-like domain"/>
    <property type="match status" value="1"/>
</dbReference>
<dbReference type="HAMAP" id="MF_00148">
    <property type="entry name" value="UDG"/>
    <property type="match status" value="1"/>
</dbReference>
<dbReference type="InterPro" id="IPR002043">
    <property type="entry name" value="UDG_fam1"/>
</dbReference>
<dbReference type="InterPro" id="IPR018085">
    <property type="entry name" value="Ura-DNA_Glyclase_AS"/>
</dbReference>
<dbReference type="InterPro" id="IPR005122">
    <property type="entry name" value="Uracil-DNA_glycosylase-like"/>
</dbReference>
<dbReference type="InterPro" id="IPR036895">
    <property type="entry name" value="Uracil-DNA_glycosylase-like_sf"/>
</dbReference>
<dbReference type="NCBIfam" id="NF003588">
    <property type="entry name" value="PRK05254.1-1"/>
    <property type="match status" value="1"/>
</dbReference>
<dbReference type="NCBIfam" id="NF003589">
    <property type="entry name" value="PRK05254.1-2"/>
    <property type="match status" value="1"/>
</dbReference>
<dbReference type="NCBIfam" id="NF003591">
    <property type="entry name" value="PRK05254.1-4"/>
    <property type="match status" value="1"/>
</dbReference>
<dbReference type="NCBIfam" id="NF003592">
    <property type="entry name" value="PRK05254.1-5"/>
    <property type="match status" value="1"/>
</dbReference>
<dbReference type="NCBIfam" id="TIGR00628">
    <property type="entry name" value="ung"/>
    <property type="match status" value="1"/>
</dbReference>
<dbReference type="PANTHER" id="PTHR11264">
    <property type="entry name" value="URACIL-DNA GLYCOSYLASE"/>
    <property type="match status" value="1"/>
</dbReference>
<dbReference type="PANTHER" id="PTHR11264:SF0">
    <property type="entry name" value="URACIL-DNA GLYCOSYLASE"/>
    <property type="match status" value="1"/>
</dbReference>
<dbReference type="Pfam" id="PF03167">
    <property type="entry name" value="UDG"/>
    <property type="match status" value="1"/>
</dbReference>
<dbReference type="SMART" id="SM00986">
    <property type="entry name" value="UDG"/>
    <property type="match status" value="1"/>
</dbReference>
<dbReference type="SMART" id="SM00987">
    <property type="entry name" value="UreE_C"/>
    <property type="match status" value="1"/>
</dbReference>
<dbReference type="SUPFAM" id="SSF52141">
    <property type="entry name" value="Uracil-DNA glycosylase-like"/>
    <property type="match status" value="1"/>
</dbReference>
<dbReference type="PROSITE" id="PS00130">
    <property type="entry name" value="U_DNA_GLYCOSYLASE"/>
    <property type="match status" value="1"/>
</dbReference>
<protein>
    <recommendedName>
        <fullName evidence="1">Uracil-DNA glycosylase</fullName>
        <shortName evidence="1">UDG</shortName>
        <ecNumber evidence="1">3.2.2.27</ecNumber>
    </recommendedName>
</protein>
<evidence type="ECO:0000255" key="1">
    <source>
        <dbReference type="HAMAP-Rule" id="MF_00148"/>
    </source>
</evidence>
<accession>B8D787</accession>